<gene>
    <name evidence="1" type="primary">rpsU</name>
    <name type="ordered locus">Hac_0782</name>
</gene>
<name>RS21_HELAH</name>
<comment type="similarity">
    <text evidence="1">Belongs to the bacterial ribosomal protein bS21 family.</text>
</comment>
<organism>
    <name type="scientific">Helicobacter acinonychis (strain Sheeba)</name>
    <dbReference type="NCBI Taxonomy" id="382638"/>
    <lineage>
        <taxon>Bacteria</taxon>
        <taxon>Pseudomonadati</taxon>
        <taxon>Campylobacterota</taxon>
        <taxon>Epsilonproteobacteria</taxon>
        <taxon>Campylobacterales</taxon>
        <taxon>Helicobacteraceae</taxon>
        <taxon>Helicobacter</taxon>
    </lineage>
</organism>
<sequence>MPGIKVREGDAFDEAYRRFKKQTDRNLVVTECRARRFFESKTEKHKKQKISAKKKILKRLYMLRRYESRL</sequence>
<protein>
    <recommendedName>
        <fullName evidence="1">Small ribosomal subunit protein bS21</fullName>
    </recommendedName>
    <alternativeName>
        <fullName evidence="2">30S ribosomal protein S21</fullName>
    </alternativeName>
</protein>
<feature type="chain" id="PRO_1000005121" description="Small ribosomal subunit protein bS21">
    <location>
        <begin position="1"/>
        <end position="70"/>
    </location>
</feature>
<proteinExistence type="inferred from homology"/>
<evidence type="ECO:0000255" key="1">
    <source>
        <dbReference type="HAMAP-Rule" id="MF_00358"/>
    </source>
</evidence>
<evidence type="ECO:0000305" key="2"/>
<reference key="1">
    <citation type="journal article" date="2006" name="PLoS Genet.">
        <title>Who ate whom? Adaptive Helicobacter genomic changes that accompanied a host jump from early humans to large felines.</title>
        <authorList>
            <person name="Eppinger M."/>
            <person name="Baar C."/>
            <person name="Linz B."/>
            <person name="Raddatz G."/>
            <person name="Lanz C."/>
            <person name="Keller H."/>
            <person name="Morelli G."/>
            <person name="Gressmann H."/>
            <person name="Achtman M."/>
            <person name="Schuster S.C."/>
        </authorList>
    </citation>
    <scope>NUCLEOTIDE SEQUENCE [LARGE SCALE GENOMIC DNA]</scope>
    <source>
        <strain>Sheeba</strain>
    </source>
</reference>
<keyword id="KW-0687">Ribonucleoprotein</keyword>
<keyword id="KW-0689">Ribosomal protein</keyword>
<accession>Q17XQ4</accession>
<dbReference type="EMBL" id="AM260522">
    <property type="protein sequence ID" value="CAJ99572.1"/>
    <property type="molecule type" value="Genomic_DNA"/>
</dbReference>
<dbReference type="RefSeq" id="WP_011577685.1">
    <property type="nucleotide sequence ID" value="NC_008229.1"/>
</dbReference>
<dbReference type="SMR" id="Q17XQ4"/>
<dbReference type="STRING" id="382638.Hac_0782"/>
<dbReference type="GeneID" id="31758208"/>
<dbReference type="KEGG" id="hac:Hac_0782"/>
<dbReference type="eggNOG" id="COG0828">
    <property type="taxonomic scope" value="Bacteria"/>
</dbReference>
<dbReference type="HOGENOM" id="CLU_159258_1_1_7"/>
<dbReference type="OrthoDB" id="9799244at2"/>
<dbReference type="BioCyc" id="HACI382638:HAC_RS03380-MONOMER"/>
<dbReference type="Proteomes" id="UP000000775">
    <property type="component" value="Chromosome"/>
</dbReference>
<dbReference type="GO" id="GO:1990904">
    <property type="term" value="C:ribonucleoprotein complex"/>
    <property type="evidence" value="ECO:0007669"/>
    <property type="project" value="UniProtKB-KW"/>
</dbReference>
<dbReference type="GO" id="GO:0005840">
    <property type="term" value="C:ribosome"/>
    <property type="evidence" value="ECO:0007669"/>
    <property type="project" value="UniProtKB-KW"/>
</dbReference>
<dbReference type="GO" id="GO:0003735">
    <property type="term" value="F:structural constituent of ribosome"/>
    <property type="evidence" value="ECO:0007669"/>
    <property type="project" value="InterPro"/>
</dbReference>
<dbReference type="GO" id="GO:0006412">
    <property type="term" value="P:translation"/>
    <property type="evidence" value="ECO:0007669"/>
    <property type="project" value="UniProtKB-UniRule"/>
</dbReference>
<dbReference type="Gene3D" id="1.20.5.1150">
    <property type="entry name" value="Ribosomal protein S8"/>
    <property type="match status" value="1"/>
</dbReference>
<dbReference type="HAMAP" id="MF_00358">
    <property type="entry name" value="Ribosomal_bS21"/>
    <property type="match status" value="1"/>
</dbReference>
<dbReference type="InterPro" id="IPR001911">
    <property type="entry name" value="Ribosomal_bS21"/>
</dbReference>
<dbReference type="InterPro" id="IPR018278">
    <property type="entry name" value="Ribosomal_bS21_CS"/>
</dbReference>
<dbReference type="InterPro" id="IPR038380">
    <property type="entry name" value="Ribosomal_bS21_sf"/>
</dbReference>
<dbReference type="NCBIfam" id="TIGR00030">
    <property type="entry name" value="S21p"/>
    <property type="match status" value="1"/>
</dbReference>
<dbReference type="Pfam" id="PF01165">
    <property type="entry name" value="Ribosomal_S21"/>
    <property type="match status" value="1"/>
</dbReference>
<dbReference type="PRINTS" id="PR00976">
    <property type="entry name" value="RIBOSOMALS21"/>
</dbReference>
<dbReference type="PROSITE" id="PS01181">
    <property type="entry name" value="RIBOSOMAL_S21"/>
    <property type="match status" value="1"/>
</dbReference>